<protein>
    <recommendedName>
        <fullName evidence="1">Rhomboid protease GlpG</fullName>
        <ecNumber evidence="1">3.4.21.105</ecNumber>
    </recommendedName>
    <alternativeName>
        <fullName evidence="1">Intramembrane serine protease</fullName>
    </alternativeName>
</protein>
<keyword id="KW-0997">Cell inner membrane</keyword>
<keyword id="KW-1003">Cell membrane</keyword>
<keyword id="KW-0378">Hydrolase</keyword>
<keyword id="KW-0472">Membrane</keyword>
<keyword id="KW-0645">Protease</keyword>
<keyword id="KW-0720">Serine protease</keyword>
<keyword id="KW-0812">Transmembrane</keyword>
<keyword id="KW-1133">Transmembrane helix</keyword>
<proteinExistence type="inferred from homology"/>
<accession>Q1C2L2</accession>
<dbReference type="EC" id="3.4.21.105" evidence="1"/>
<dbReference type="EMBL" id="CP000308">
    <property type="protein sequence ID" value="ABG15310.1"/>
    <property type="molecule type" value="Genomic_DNA"/>
</dbReference>
<dbReference type="RefSeq" id="WP_002216348.1">
    <property type="nucleotide sequence ID" value="NZ_CP009906.1"/>
</dbReference>
<dbReference type="SMR" id="Q1C2L2"/>
<dbReference type="GeneID" id="57974477"/>
<dbReference type="KEGG" id="ypa:YPA_3348"/>
<dbReference type="Proteomes" id="UP000001971">
    <property type="component" value="Chromosome"/>
</dbReference>
<dbReference type="GO" id="GO:0005886">
    <property type="term" value="C:plasma membrane"/>
    <property type="evidence" value="ECO:0007669"/>
    <property type="project" value="UniProtKB-SubCell"/>
</dbReference>
<dbReference type="GO" id="GO:0004252">
    <property type="term" value="F:serine-type endopeptidase activity"/>
    <property type="evidence" value="ECO:0007669"/>
    <property type="project" value="UniProtKB-UniRule"/>
</dbReference>
<dbReference type="GO" id="GO:0006508">
    <property type="term" value="P:proteolysis"/>
    <property type="evidence" value="ECO:0007669"/>
    <property type="project" value="UniProtKB-UniRule"/>
</dbReference>
<dbReference type="Gene3D" id="3.30.70.2350">
    <property type="match status" value="1"/>
</dbReference>
<dbReference type="Gene3D" id="1.20.1540.10">
    <property type="entry name" value="Rhomboid-like"/>
    <property type="match status" value="1"/>
</dbReference>
<dbReference type="HAMAP" id="MF_01594">
    <property type="entry name" value="Rhomboid_GlpG"/>
    <property type="match status" value="1"/>
</dbReference>
<dbReference type="InterPro" id="IPR038236">
    <property type="entry name" value="GlpG_N_sf"/>
</dbReference>
<dbReference type="InterPro" id="IPR022732">
    <property type="entry name" value="Peptidase_S54_GlpG_N"/>
</dbReference>
<dbReference type="InterPro" id="IPR022764">
    <property type="entry name" value="Peptidase_S54_rhomboid_dom"/>
</dbReference>
<dbReference type="InterPro" id="IPR035952">
    <property type="entry name" value="Rhomboid-like_sf"/>
</dbReference>
<dbReference type="InterPro" id="IPR023662">
    <property type="entry name" value="Rhomboid_protease_GlpG"/>
</dbReference>
<dbReference type="NCBIfam" id="NF008155">
    <property type="entry name" value="PRK10907.1"/>
    <property type="match status" value="1"/>
</dbReference>
<dbReference type="NCBIfam" id="TIGR04239">
    <property type="entry name" value="rhombo_GlpG"/>
    <property type="match status" value="1"/>
</dbReference>
<dbReference type="PANTHER" id="PTHR43066:SF26">
    <property type="entry name" value="RHOMBOID PROTEASE GLPG"/>
    <property type="match status" value="1"/>
</dbReference>
<dbReference type="PANTHER" id="PTHR43066">
    <property type="entry name" value="RHOMBOID-RELATED PROTEIN"/>
    <property type="match status" value="1"/>
</dbReference>
<dbReference type="Pfam" id="PF01694">
    <property type="entry name" value="Rhomboid"/>
    <property type="match status" value="1"/>
</dbReference>
<dbReference type="Pfam" id="PF12122">
    <property type="entry name" value="Rhomboid_N"/>
    <property type="match status" value="1"/>
</dbReference>
<dbReference type="SUPFAM" id="SSF144091">
    <property type="entry name" value="Rhomboid-like"/>
    <property type="match status" value="1"/>
</dbReference>
<reference key="1">
    <citation type="journal article" date="2006" name="J. Bacteriol.">
        <title>Complete genome sequence of Yersinia pestis strains Antiqua and Nepal516: evidence of gene reduction in an emerging pathogen.</title>
        <authorList>
            <person name="Chain P.S.G."/>
            <person name="Hu P."/>
            <person name="Malfatti S.A."/>
            <person name="Radnedge L."/>
            <person name="Larimer F."/>
            <person name="Vergez L.M."/>
            <person name="Worsham P."/>
            <person name="Chu M.C."/>
            <person name="Andersen G.L."/>
        </authorList>
    </citation>
    <scope>NUCLEOTIDE SEQUENCE [LARGE SCALE GENOMIC DNA]</scope>
    <source>
        <strain>Antiqua</strain>
    </source>
</reference>
<gene>
    <name evidence="1" type="primary">glpG</name>
    <name type="ordered locus">YPA_3348</name>
</gene>
<feature type="chain" id="PRO_0000321701" description="Rhomboid protease GlpG">
    <location>
        <begin position="1"/>
        <end position="278"/>
    </location>
</feature>
<feature type="transmembrane region" description="Helical" evidence="1">
    <location>
        <begin position="94"/>
        <end position="114"/>
    </location>
</feature>
<feature type="transmembrane region" description="Helical" evidence="1">
    <location>
        <begin position="143"/>
        <end position="163"/>
    </location>
</feature>
<feature type="transmembrane region" description="Helical" evidence="1">
    <location>
        <begin position="175"/>
        <end position="195"/>
    </location>
</feature>
<feature type="transmembrane region" description="Helical" evidence="1">
    <location>
        <begin position="196"/>
        <end position="216"/>
    </location>
</feature>
<feature type="transmembrane region" description="Helical" evidence="1">
    <location>
        <begin position="224"/>
        <end position="241"/>
    </location>
</feature>
<feature type="transmembrane region" description="Helical" evidence="1">
    <location>
        <begin position="245"/>
        <end position="267"/>
    </location>
</feature>
<feature type="active site" description="Nucleophile" evidence="1">
    <location>
        <position position="202"/>
    </location>
</feature>
<feature type="active site" evidence="1">
    <location>
        <position position="255"/>
    </location>
</feature>
<evidence type="ECO:0000255" key="1">
    <source>
        <dbReference type="HAMAP-Rule" id="MF_01594"/>
    </source>
</evidence>
<sequence>MTRVIVISNLRLAQAFVDYMATHHVALEIRPDAQGVEIWLADDEQLSAVQHELEQFLLDPLNPRYQAASWQAGNVNSNLPYQRFSYLQTLRSQAGPLTLSVMVLCIAIYILMLITGDMAVMSWLAWPYNSSQYLQIWRWVSHAFLHFSLLHILFNLMWWWYLGGQMEKRLGTSKLLVLTIVSAVFSGWGQSLFSGANFGGLSGVVYALMGYVWLTGERAPERGISLPRGLMAFSVLWLIAGYFDILGLSIANAAHVSGLIIGLLMAFWDTRNSARTVQ</sequence>
<comment type="function">
    <text evidence="1">Rhomboid-type serine protease that catalyzes intramembrane proteolysis.</text>
</comment>
<comment type="catalytic activity">
    <reaction evidence="1">
        <text>Cleaves type-1 transmembrane domains using a catalytic dyad composed of serine and histidine that are contributed by different transmembrane domains.</text>
        <dbReference type="EC" id="3.4.21.105"/>
    </reaction>
</comment>
<comment type="subcellular location">
    <subcellularLocation>
        <location evidence="1">Cell inner membrane</location>
        <topology evidence="1">Multi-pass membrane protein</topology>
    </subcellularLocation>
</comment>
<comment type="similarity">
    <text evidence="1">Belongs to the peptidase S54 family.</text>
</comment>
<name>GLPG_YERPA</name>
<organism>
    <name type="scientific">Yersinia pestis bv. Antiqua (strain Antiqua)</name>
    <dbReference type="NCBI Taxonomy" id="360102"/>
    <lineage>
        <taxon>Bacteria</taxon>
        <taxon>Pseudomonadati</taxon>
        <taxon>Pseudomonadota</taxon>
        <taxon>Gammaproteobacteria</taxon>
        <taxon>Enterobacterales</taxon>
        <taxon>Yersiniaceae</taxon>
        <taxon>Yersinia</taxon>
    </lineage>
</organism>